<comment type="function">
    <text evidence="1">Allows the formation of correctly charged Asn-tRNA(Asn) or Gln-tRNA(Gln) through the transamidation of misacylated Asp-tRNA(Asn) or Glu-tRNA(Gln) in organisms which lack either or both of asparaginyl-tRNA or glutaminyl-tRNA synthetases. The reaction takes place in the presence of glutamine and ATP through an activated phospho-Asp-tRNA(Asn) or phospho-Glu-tRNA(Gln).</text>
</comment>
<comment type="catalytic activity">
    <reaction evidence="1">
        <text>L-glutamyl-tRNA(Gln) + L-glutamine + ATP + H2O = L-glutaminyl-tRNA(Gln) + L-glutamate + ADP + phosphate + H(+)</text>
        <dbReference type="Rhea" id="RHEA:17521"/>
        <dbReference type="Rhea" id="RHEA-COMP:9681"/>
        <dbReference type="Rhea" id="RHEA-COMP:9684"/>
        <dbReference type="ChEBI" id="CHEBI:15377"/>
        <dbReference type="ChEBI" id="CHEBI:15378"/>
        <dbReference type="ChEBI" id="CHEBI:29985"/>
        <dbReference type="ChEBI" id="CHEBI:30616"/>
        <dbReference type="ChEBI" id="CHEBI:43474"/>
        <dbReference type="ChEBI" id="CHEBI:58359"/>
        <dbReference type="ChEBI" id="CHEBI:78520"/>
        <dbReference type="ChEBI" id="CHEBI:78521"/>
        <dbReference type="ChEBI" id="CHEBI:456216"/>
    </reaction>
</comment>
<comment type="catalytic activity">
    <reaction evidence="1">
        <text>L-aspartyl-tRNA(Asn) + L-glutamine + ATP + H2O = L-asparaginyl-tRNA(Asn) + L-glutamate + ADP + phosphate + 2 H(+)</text>
        <dbReference type="Rhea" id="RHEA:14513"/>
        <dbReference type="Rhea" id="RHEA-COMP:9674"/>
        <dbReference type="Rhea" id="RHEA-COMP:9677"/>
        <dbReference type="ChEBI" id="CHEBI:15377"/>
        <dbReference type="ChEBI" id="CHEBI:15378"/>
        <dbReference type="ChEBI" id="CHEBI:29985"/>
        <dbReference type="ChEBI" id="CHEBI:30616"/>
        <dbReference type="ChEBI" id="CHEBI:43474"/>
        <dbReference type="ChEBI" id="CHEBI:58359"/>
        <dbReference type="ChEBI" id="CHEBI:78515"/>
        <dbReference type="ChEBI" id="CHEBI:78516"/>
        <dbReference type="ChEBI" id="CHEBI:456216"/>
    </reaction>
</comment>
<comment type="subunit">
    <text evidence="1">Heterotrimer of A, B and C subunits.</text>
</comment>
<comment type="similarity">
    <text evidence="1">Belongs to the GatB/GatE family. GatB subfamily.</text>
</comment>
<feature type="chain" id="PRO_0000148768" description="Aspartyl/glutamyl-tRNA(Asn/Gln) amidotransferase subunit B">
    <location>
        <begin position="1"/>
        <end position="484"/>
    </location>
</feature>
<name>GATB_BORPE</name>
<dbReference type="EC" id="6.3.5.-" evidence="1"/>
<dbReference type="EMBL" id="BX640412">
    <property type="protein sequence ID" value="CAE44703.1"/>
    <property type="molecule type" value="Genomic_DNA"/>
</dbReference>
<dbReference type="RefSeq" id="NP_879243.1">
    <property type="nucleotide sequence ID" value="NC_002929.2"/>
</dbReference>
<dbReference type="RefSeq" id="WP_010929770.1">
    <property type="nucleotide sequence ID" value="NZ_CP039022.1"/>
</dbReference>
<dbReference type="SMR" id="Q7VSN3"/>
<dbReference type="STRING" id="257313.BP0371"/>
<dbReference type="PaxDb" id="257313-BP0371"/>
<dbReference type="GeneID" id="69603376"/>
<dbReference type="KEGG" id="bpe:BP0371"/>
<dbReference type="PATRIC" id="fig|257313.5.peg.401"/>
<dbReference type="eggNOG" id="COG0064">
    <property type="taxonomic scope" value="Bacteria"/>
</dbReference>
<dbReference type="HOGENOM" id="CLU_019240_0_0_4"/>
<dbReference type="Proteomes" id="UP000002676">
    <property type="component" value="Chromosome"/>
</dbReference>
<dbReference type="GO" id="GO:0050566">
    <property type="term" value="F:asparaginyl-tRNA synthase (glutamine-hydrolyzing) activity"/>
    <property type="evidence" value="ECO:0007669"/>
    <property type="project" value="RHEA"/>
</dbReference>
<dbReference type="GO" id="GO:0005524">
    <property type="term" value="F:ATP binding"/>
    <property type="evidence" value="ECO:0007669"/>
    <property type="project" value="UniProtKB-KW"/>
</dbReference>
<dbReference type="GO" id="GO:0050567">
    <property type="term" value="F:glutaminyl-tRNA synthase (glutamine-hydrolyzing) activity"/>
    <property type="evidence" value="ECO:0007669"/>
    <property type="project" value="UniProtKB-UniRule"/>
</dbReference>
<dbReference type="GO" id="GO:0070681">
    <property type="term" value="P:glutaminyl-tRNAGln biosynthesis via transamidation"/>
    <property type="evidence" value="ECO:0007669"/>
    <property type="project" value="TreeGrafter"/>
</dbReference>
<dbReference type="GO" id="GO:0006412">
    <property type="term" value="P:translation"/>
    <property type="evidence" value="ECO:0007669"/>
    <property type="project" value="UniProtKB-UniRule"/>
</dbReference>
<dbReference type="FunFam" id="1.10.10.410:FF:000001">
    <property type="entry name" value="Aspartyl/glutamyl-tRNA(Asn/Gln) amidotransferase subunit B"/>
    <property type="match status" value="1"/>
</dbReference>
<dbReference type="FunFam" id="1.10.150.380:FF:000001">
    <property type="entry name" value="Aspartyl/glutamyl-tRNA(Asn/Gln) amidotransferase subunit B"/>
    <property type="match status" value="1"/>
</dbReference>
<dbReference type="Gene3D" id="1.10.10.410">
    <property type="match status" value="1"/>
</dbReference>
<dbReference type="Gene3D" id="1.10.150.380">
    <property type="entry name" value="GatB domain, N-terminal subdomain"/>
    <property type="match status" value="1"/>
</dbReference>
<dbReference type="HAMAP" id="MF_00121">
    <property type="entry name" value="GatB"/>
    <property type="match status" value="1"/>
</dbReference>
<dbReference type="InterPro" id="IPR017959">
    <property type="entry name" value="Asn/Gln-tRNA_amidoTrfase_suB/E"/>
</dbReference>
<dbReference type="InterPro" id="IPR006075">
    <property type="entry name" value="Asn/Gln-tRNA_Trfase_suB/E_cat"/>
</dbReference>
<dbReference type="InterPro" id="IPR018027">
    <property type="entry name" value="Asn/Gln_amidotransferase"/>
</dbReference>
<dbReference type="InterPro" id="IPR003789">
    <property type="entry name" value="Asn/Gln_tRNA_amidoTrase-B-like"/>
</dbReference>
<dbReference type="InterPro" id="IPR004413">
    <property type="entry name" value="GatB"/>
</dbReference>
<dbReference type="InterPro" id="IPR042114">
    <property type="entry name" value="GatB_C_1"/>
</dbReference>
<dbReference type="InterPro" id="IPR023168">
    <property type="entry name" value="GatB_Yqey_C_2"/>
</dbReference>
<dbReference type="InterPro" id="IPR017958">
    <property type="entry name" value="Gln-tRNA_amidoTrfase_suB_CS"/>
</dbReference>
<dbReference type="InterPro" id="IPR014746">
    <property type="entry name" value="Gln_synth/guanido_kin_cat_dom"/>
</dbReference>
<dbReference type="NCBIfam" id="TIGR00133">
    <property type="entry name" value="gatB"/>
    <property type="match status" value="1"/>
</dbReference>
<dbReference type="NCBIfam" id="NF004012">
    <property type="entry name" value="PRK05477.1-2"/>
    <property type="match status" value="1"/>
</dbReference>
<dbReference type="NCBIfam" id="NF004014">
    <property type="entry name" value="PRK05477.1-4"/>
    <property type="match status" value="1"/>
</dbReference>
<dbReference type="NCBIfam" id="NF004015">
    <property type="entry name" value="PRK05477.1-5"/>
    <property type="match status" value="1"/>
</dbReference>
<dbReference type="PANTHER" id="PTHR11659">
    <property type="entry name" value="GLUTAMYL-TRNA GLN AMIDOTRANSFERASE SUBUNIT B MITOCHONDRIAL AND PROKARYOTIC PET112-RELATED"/>
    <property type="match status" value="1"/>
</dbReference>
<dbReference type="PANTHER" id="PTHR11659:SF0">
    <property type="entry name" value="GLUTAMYL-TRNA(GLN) AMIDOTRANSFERASE SUBUNIT B, MITOCHONDRIAL"/>
    <property type="match status" value="1"/>
</dbReference>
<dbReference type="Pfam" id="PF02934">
    <property type="entry name" value="GatB_N"/>
    <property type="match status" value="1"/>
</dbReference>
<dbReference type="Pfam" id="PF02637">
    <property type="entry name" value="GatB_Yqey"/>
    <property type="match status" value="1"/>
</dbReference>
<dbReference type="SMART" id="SM00845">
    <property type="entry name" value="GatB_Yqey"/>
    <property type="match status" value="1"/>
</dbReference>
<dbReference type="SUPFAM" id="SSF89095">
    <property type="entry name" value="GatB/YqeY motif"/>
    <property type="match status" value="1"/>
</dbReference>
<dbReference type="SUPFAM" id="SSF55931">
    <property type="entry name" value="Glutamine synthetase/guanido kinase"/>
    <property type="match status" value="1"/>
</dbReference>
<dbReference type="PROSITE" id="PS01234">
    <property type="entry name" value="GATB"/>
    <property type="match status" value="1"/>
</dbReference>
<proteinExistence type="inferred from homology"/>
<accession>Q7VSN3</accession>
<keyword id="KW-0067">ATP-binding</keyword>
<keyword id="KW-0436">Ligase</keyword>
<keyword id="KW-0547">Nucleotide-binding</keyword>
<keyword id="KW-0648">Protein biosynthesis</keyword>
<keyword id="KW-1185">Reference proteome</keyword>
<gene>
    <name evidence="1" type="primary">gatB</name>
    <name type="ordered locus">BP0371</name>
</gene>
<organism>
    <name type="scientific">Bordetella pertussis (strain Tohama I / ATCC BAA-589 / NCTC 13251)</name>
    <dbReference type="NCBI Taxonomy" id="257313"/>
    <lineage>
        <taxon>Bacteria</taxon>
        <taxon>Pseudomonadati</taxon>
        <taxon>Pseudomonadota</taxon>
        <taxon>Betaproteobacteria</taxon>
        <taxon>Burkholderiales</taxon>
        <taxon>Alcaligenaceae</taxon>
        <taxon>Bordetella</taxon>
    </lineage>
</organism>
<protein>
    <recommendedName>
        <fullName evidence="1">Aspartyl/glutamyl-tRNA(Asn/Gln) amidotransferase subunit B</fullName>
        <shortName evidence="1">Asp/Glu-ADT subunit B</shortName>
        <ecNumber evidence="1">6.3.5.-</ecNumber>
    </recommendedName>
</protein>
<sequence length="484" mass="52332">MNWEIVIGLETHTQLSTDSKIFSGSSTRFGAAPNTQANAVDLALPGSLPVMNRGAAERAILFGLAVGGKVAPRSVFARKNYFYPDLPKGYQISQYELPVVEGGTLSFFVGEEEKTVNLTRAHLEEDAGKSLHDEFSLASGAPASGIDLNRAGTPLLEIVTEPEMRSAAEAVAYARALHSLVVWLGICDGNMQEGSFRCDANVSVRPVGQKEFGTRTEIKNVNSFRFLERAILFEARRQIELIEDGGTVVQETRLYDADRDETRSMRSKEDAHDYRYFPDPDLPPLVIGQDWIDAVRAGMPELPAAQRARFEADYGLPAYDAAQLTVSRAMADYFEAVARALPAGQAKLAANWIMGEVAATLNREEKDIDAAPVSAAALAALINRIIDGTISNKIARDVFAAMWAGENGGDADAIIEARGLKQISDSGAIGAMIDEVLAANPAIVEEYRAGKQKAFNSLVGQIMKAAKGKANPQQVNELLKEKLG</sequence>
<reference key="1">
    <citation type="journal article" date="2003" name="Nat. Genet.">
        <title>Comparative analysis of the genome sequences of Bordetella pertussis, Bordetella parapertussis and Bordetella bronchiseptica.</title>
        <authorList>
            <person name="Parkhill J."/>
            <person name="Sebaihia M."/>
            <person name="Preston A."/>
            <person name="Murphy L.D."/>
            <person name="Thomson N.R."/>
            <person name="Harris D.E."/>
            <person name="Holden M.T.G."/>
            <person name="Churcher C.M."/>
            <person name="Bentley S.D."/>
            <person name="Mungall K.L."/>
            <person name="Cerdeno-Tarraga A.-M."/>
            <person name="Temple L."/>
            <person name="James K.D."/>
            <person name="Harris B."/>
            <person name="Quail M.A."/>
            <person name="Achtman M."/>
            <person name="Atkin R."/>
            <person name="Baker S."/>
            <person name="Basham D."/>
            <person name="Bason N."/>
            <person name="Cherevach I."/>
            <person name="Chillingworth T."/>
            <person name="Collins M."/>
            <person name="Cronin A."/>
            <person name="Davis P."/>
            <person name="Doggett J."/>
            <person name="Feltwell T."/>
            <person name="Goble A."/>
            <person name="Hamlin N."/>
            <person name="Hauser H."/>
            <person name="Holroyd S."/>
            <person name="Jagels K."/>
            <person name="Leather S."/>
            <person name="Moule S."/>
            <person name="Norberczak H."/>
            <person name="O'Neil S."/>
            <person name="Ormond D."/>
            <person name="Price C."/>
            <person name="Rabbinowitsch E."/>
            <person name="Rutter S."/>
            <person name="Sanders M."/>
            <person name="Saunders D."/>
            <person name="Seeger K."/>
            <person name="Sharp S."/>
            <person name="Simmonds M."/>
            <person name="Skelton J."/>
            <person name="Squares R."/>
            <person name="Squares S."/>
            <person name="Stevens K."/>
            <person name="Unwin L."/>
            <person name="Whitehead S."/>
            <person name="Barrell B.G."/>
            <person name="Maskell D.J."/>
        </authorList>
    </citation>
    <scope>NUCLEOTIDE SEQUENCE [LARGE SCALE GENOMIC DNA]</scope>
    <source>
        <strain>Tohama I / ATCC BAA-589 / NCTC 13251</strain>
    </source>
</reference>
<evidence type="ECO:0000255" key="1">
    <source>
        <dbReference type="HAMAP-Rule" id="MF_00121"/>
    </source>
</evidence>